<keyword id="KW-0007">Acetylation</keyword>
<keyword id="KW-0106">Calcium</keyword>
<keyword id="KW-0479">Metal-binding</keyword>
<keyword id="KW-0488">Methylation</keyword>
<keyword id="KW-0677">Repeat</keyword>
<reference key="1">
    <citation type="journal article" date="1999" name="J. Mol. Endocrinol.">
        <title>The upregulation of messenger ribonucleic acids during 17alpha, 20beta-dihydroxy-4-pregnen-3-one-induced ovulation in the perch ovary.</title>
        <authorList>
            <person name="Langenau D.M."/>
            <person name="Goetz F.W."/>
            <person name="Roberts S.B."/>
        </authorList>
    </citation>
    <scope>NUCLEOTIDE SEQUENCE [MRNA]</scope>
</reference>
<proteinExistence type="evidence at transcript level"/>
<organism>
    <name type="scientific">Perca flavescens</name>
    <name type="common">American yellow perch</name>
    <name type="synonym">Morone flavescens</name>
    <dbReference type="NCBI Taxonomy" id="8167"/>
    <lineage>
        <taxon>Eukaryota</taxon>
        <taxon>Metazoa</taxon>
        <taxon>Chordata</taxon>
        <taxon>Craniata</taxon>
        <taxon>Vertebrata</taxon>
        <taxon>Euteleostomi</taxon>
        <taxon>Actinopterygii</taxon>
        <taxon>Neopterygii</taxon>
        <taxon>Teleostei</taxon>
        <taxon>Neoteleostei</taxon>
        <taxon>Acanthomorphata</taxon>
        <taxon>Eupercaria</taxon>
        <taxon>Perciformes</taxon>
        <taxon>Percoidei</taxon>
        <taxon>Percidae</taxon>
        <taxon>Percinae</taxon>
        <taxon>Perca</taxon>
    </lineage>
</organism>
<sequence>MADQLTEEQIAEFKEAFSLFDKDGDGTITTKELGTVMRSLGQNPTEAELQDMINEVDADGNGTIDFPEFLTMMARKMKDTDSEEEIREAFRVFDKDGNGYISAAELRHVMTNLGEKLTDEEVDEMIREADIDGDGQVNYEEFVQMMTAK</sequence>
<dbReference type="EMBL" id="AF085250">
    <property type="protein sequence ID" value="AAC63306.1"/>
    <property type="molecule type" value="mRNA"/>
</dbReference>
<dbReference type="SMR" id="Q71UH6"/>
<dbReference type="GO" id="GO:0016460">
    <property type="term" value="C:myosin II complex"/>
    <property type="evidence" value="ECO:0007669"/>
    <property type="project" value="TreeGrafter"/>
</dbReference>
<dbReference type="GO" id="GO:0005509">
    <property type="term" value="F:calcium ion binding"/>
    <property type="evidence" value="ECO:0007669"/>
    <property type="project" value="InterPro"/>
</dbReference>
<dbReference type="CDD" id="cd00051">
    <property type="entry name" value="EFh"/>
    <property type="match status" value="2"/>
</dbReference>
<dbReference type="FunFam" id="1.10.238.10:FF:000527">
    <property type="entry name" value="Calmodulin-3"/>
    <property type="match status" value="1"/>
</dbReference>
<dbReference type="Gene3D" id="1.10.238.10">
    <property type="entry name" value="EF-hand"/>
    <property type="match status" value="3"/>
</dbReference>
<dbReference type="InterPro" id="IPR050230">
    <property type="entry name" value="CALM/Myosin/TropC-like"/>
</dbReference>
<dbReference type="InterPro" id="IPR011992">
    <property type="entry name" value="EF-hand-dom_pair"/>
</dbReference>
<dbReference type="InterPro" id="IPR018247">
    <property type="entry name" value="EF_Hand_1_Ca_BS"/>
</dbReference>
<dbReference type="InterPro" id="IPR002048">
    <property type="entry name" value="EF_hand_dom"/>
</dbReference>
<dbReference type="PANTHER" id="PTHR23048:SF0">
    <property type="entry name" value="CALMODULIN LIKE 3"/>
    <property type="match status" value="1"/>
</dbReference>
<dbReference type="PANTHER" id="PTHR23048">
    <property type="entry name" value="MYOSIN LIGHT CHAIN 1, 3"/>
    <property type="match status" value="1"/>
</dbReference>
<dbReference type="Pfam" id="PF13499">
    <property type="entry name" value="EF-hand_7"/>
    <property type="match status" value="2"/>
</dbReference>
<dbReference type="PRINTS" id="PR00450">
    <property type="entry name" value="RECOVERIN"/>
</dbReference>
<dbReference type="SMART" id="SM00054">
    <property type="entry name" value="EFh"/>
    <property type="match status" value="4"/>
</dbReference>
<dbReference type="SUPFAM" id="SSF47473">
    <property type="entry name" value="EF-hand"/>
    <property type="match status" value="1"/>
</dbReference>
<dbReference type="PROSITE" id="PS00018">
    <property type="entry name" value="EF_HAND_1"/>
    <property type="match status" value="4"/>
</dbReference>
<dbReference type="PROSITE" id="PS50222">
    <property type="entry name" value="EF_HAND_2"/>
    <property type="match status" value="4"/>
</dbReference>
<feature type="initiator methionine" description="Removed" evidence="2">
    <location>
        <position position="1"/>
    </location>
</feature>
<feature type="chain" id="PRO_0000198240" description="Calmodulin">
    <location>
        <begin position="2"/>
        <end position="149"/>
    </location>
</feature>
<feature type="domain" description="EF-hand 1" evidence="3">
    <location>
        <begin position="8"/>
        <end position="43"/>
    </location>
</feature>
<feature type="domain" description="EF-hand 2" evidence="3">
    <location>
        <begin position="44"/>
        <end position="79"/>
    </location>
</feature>
<feature type="domain" description="EF-hand 3" evidence="3">
    <location>
        <begin position="81"/>
        <end position="116"/>
    </location>
</feature>
<feature type="domain" description="EF-hand 4" evidence="3">
    <location>
        <begin position="117"/>
        <end position="149"/>
    </location>
</feature>
<feature type="binding site" evidence="3">
    <location>
        <position position="21"/>
    </location>
    <ligand>
        <name>Ca(2+)</name>
        <dbReference type="ChEBI" id="CHEBI:29108"/>
        <label>1</label>
    </ligand>
</feature>
<feature type="binding site" evidence="3">
    <location>
        <position position="23"/>
    </location>
    <ligand>
        <name>Ca(2+)</name>
        <dbReference type="ChEBI" id="CHEBI:29108"/>
        <label>1</label>
    </ligand>
</feature>
<feature type="binding site" evidence="3">
    <location>
        <position position="25"/>
    </location>
    <ligand>
        <name>Ca(2+)</name>
        <dbReference type="ChEBI" id="CHEBI:29108"/>
        <label>1</label>
    </ligand>
</feature>
<feature type="binding site" evidence="3">
    <location>
        <position position="27"/>
    </location>
    <ligand>
        <name>Ca(2+)</name>
        <dbReference type="ChEBI" id="CHEBI:29108"/>
        <label>1</label>
    </ligand>
</feature>
<feature type="binding site" evidence="3">
    <location>
        <position position="32"/>
    </location>
    <ligand>
        <name>Ca(2+)</name>
        <dbReference type="ChEBI" id="CHEBI:29108"/>
        <label>1</label>
    </ligand>
</feature>
<feature type="binding site" evidence="3">
    <location>
        <position position="57"/>
    </location>
    <ligand>
        <name>Ca(2+)</name>
        <dbReference type="ChEBI" id="CHEBI:29108"/>
        <label>2</label>
    </ligand>
</feature>
<feature type="binding site" evidence="3">
    <location>
        <position position="59"/>
    </location>
    <ligand>
        <name>Ca(2+)</name>
        <dbReference type="ChEBI" id="CHEBI:29108"/>
        <label>2</label>
    </ligand>
</feature>
<feature type="binding site" evidence="3">
    <location>
        <position position="61"/>
    </location>
    <ligand>
        <name>Ca(2+)</name>
        <dbReference type="ChEBI" id="CHEBI:29108"/>
        <label>2</label>
    </ligand>
</feature>
<feature type="binding site" evidence="3">
    <location>
        <position position="63"/>
    </location>
    <ligand>
        <name>Ca(2+)</name>
        <dbReference type="ChEBI" id="CHEBI:29108"/>
        <label>2</label>
    </ligand>
</feature>
<feature type="binding site" evidence="3">
    <location>
        <position position="68"/>
    </location>
    <ligand>
        <name>Ca(2+)</name>
        <dbReference type="ChEBI" id="CHEBI:29108"/>
        <label>2</label>
    </ligand>
</feature>
<feature type="binding site" evidence="3">
    <location>
        <position position="94"/>
    </location>
    <ligand>
        <name>Ca(2+)</name>
        <dbReference type="ChEBI" id="CHEBI:29108"/>
        <label>3</label>
    </ligand>
</feature>
<feature type="binding site" evidence="3">
    <location>
        <position position="96"/>
    </location>
    <ligand>
        <name>Ca(2+)</name>
        <dbReference type="ChEBI" id="CHEBI:29108"/>
        <label>3</label>
    </ligand>
</feature>
<feature type="binding site" evidence="3">
    <location>
        <position position="98"/>
    </location>
    <ligand>
        <name>Ca(2+)</name>
        <dbReference type="ChEBI" id="CHEBI:29108"/>
        <label>3</label>
    </ligand>
</feature>
<feature type="binding site" evidence="3">
    <location>
        <position position="100"/>
    </location>
    <ligand>
        <name>Ca(2+)</name>
        <dbReference type="ChEBI" id="CHEBI:29108"/>
        <label>3</label>
    </ligand>
</feature>
<feature type="binding site" evidence="3">
    <location>
        <position position="105"/>
    </location>
    <ligand>
        <name>Ca(2+)</name>
        <dbReference type="ChEBI" id="CHEBI:29108"/>
        <label>3</label>
    </ligand>
</feature>
<feature type="binding site" evidence="3">
    <location>
        <position position="130"/>
    </location>
    <ligand>
        <name>Ca(2+)</name>
        <dbReference type="ChEBI" id="CHEBI:29108"/>
        <label>4</label>
    </ligand>
</feature>
<feature type="binding site" evidence="3">
    <location>
        <position position="132"/>
    </location>
    <ligand>
        <name>Ca(2+)</name>
        <dbReference type="ChEBI" id="CHEBI:29108"/>
        <label>4</label>
    </ligand>
</feature>
<feature type="binding site" evidence="3">
    <location>
        <position position="134"/>
    </location>
    <ligand>
        <name>Ca(2+)</name>
        <dbReference type="ChEBI" id="CHEBI:29108"/>
        <label>4</label>
    </ligand>
</feature>
<feature type="binding site" evidence="3">
    <location>
        <position position="136"/>
    </location>
    <ligand>
        <name>Ca(2+)</name>
        <dbReference type="ChEBI" id="CHEBI:29108"/>
        <label>4</label>
    </ligand>
</feature>
<feature type="binding site" evidence="3">
    <location>
        <position position="141"/>
    </location>
    <ligand>
        <name>Ca(2+)</name>
        <dbReference type="ChEBI" id="CHEBI:29108"/>
        <label>4</label>
    </ligand>
</feature>
<feature type="modified residue" description="N-acetylalanine" evidence="2">
    <location>
        <position position="2"/>
    </location>
</feature>
<feature type="modified residue" description="N6,N6,N6-trimethyllysine" evidence="2">
    <location>
        <position position="116"/>
    </location>
</feature>
<name>CALM_PERFV</name>
<comment type="function">
    <text evidence="2">Calmodulin acts as part of a calcium signal transduction pathway by mediating the control of a large number of enzymes, ion channels, aquaporins and other proteins through calcium-binding. Calcium-binding is required for the activation of calmodulin. Among the enzymes to be stimulated by the calmodulin-calcium complex are a number of protein kinases, such as myosin light-chain kinases and calmodulin-dependent protein kinase type II (CaMK2), and phosphatases.</text>
</comment>
<comment type="miscellaneous">
    <text evidence="1">This protein has four functional calcium-binding sites.</text>
</comment>
<comment type="similarity">
    <text evidence="4">Belongs to the calmodulin family.</text>
</comment>
<accession>Q71UH6</accession>
<gene>
    <name type="primary">calm</name>
    <name type="synonym">cal1</name>
</gene>
<protein>
    <recommendedName>
        <fullName>Calmodulin</fullName>
        <shortName>CaM</shortName>
    </recommendedName>
</protein>
<evidence type="ECO:0000250" key="1"/>
<evidence type="ECO:0000250" key="2">
    <source>
        <dbReference type="UniProtKB" id="P0DP23"/>
    </source>
</evidence>
<evidence type="ECO:0000255" key="3">
    <source>
        <dbReference type="PROSITE-ProRule" id="PRU00448"/>
    </source>
</evidence>
<evidence type="ECO:0000305" key="4"/>